<gene>
    <name evidence="1" type="primary">ubiA</name>
    <name type="ordered locus">Sbal223_3817</name>
</gene>
<reference key="1">
    <citation type="submission" date="2008-12" db="EMBL/GenBank/DDBJ databases">
        <title>Complete sequence of chromosome of Shewanella baltica OS223.</title>
        <authorList>
            <consortium name="US DOE Joint Genome Institute"/>
            <person name="Lucas S."/>
            <person name="Copeland A."/>
            <person name="Lapidus A."/>
            <person name="Glavina del Rio T."/>
            <person name="Dalin E."/>
            <person name="Tice H."/>
            <person name="Bruce D."/>
            <person name="Goodwin L."/>
            <person name="Pitluck S."/>
            <person name="Chertkov O."/>
            <person name="Meincke L."/>
            <person name="Brettin T."/>
            <person name="Detter J.C."/>
            <person name="Han C."/>
            <person name="Kuske C.R."/>
            <person name="Larimer F."/>
            <person name="Land M."/>
            <person name="Hauser L."/>
            <person name="Kyrpides N."/>
            <person name="Ovchinnikova G."/>
            <person name="Brettar I."/>
            <person name="Rodrigues J."/>
            <person name="Konstantinidis K."/>
            <person name="Tiedje J."/>
        </authorList>
    </citation>
    <scope>NUCLEOTIDE SEQUENCE [LARGE SCALE GENOMIC DNA]</scope>
    <source>
        <strain>OS223</strain>
    </source>
</reference>
<sequence>MNLKQKWDVYSRLTRIDRPIGTLLLLWPCLMALMLAAGGMPDLKVLVIFIIGVVIMRACGCIINDYADRDLDSFVERTRSRPLASGEISTKEALILFVILGLSAFGLVLLLNGLVVKLSVVGIILTIIYPFTKRITNMPQMFLGIVWSWSIPMAYAAQTGEVPMEAWWLFAANWCWTVAYDTMYAMVDRDDDLKVGIKSTAILFGKYDRQIIGLFQLAALACFIAAGWSADRGLLYGLGILTFVGFSTYQQMLIFDRERAPCFKAFLNNNWAGLALFVGLGADYLI</sequence>
<accession>B8E613</accession>
<name>UBIA_SHEB2</name>
<protein>
    <recommendedName>
        <fullName evidence="1">4-hydroxybenzoate octaprenyltransferase</fullName>
        <ecNumber evidence="1">2.5.1.39</ecNumber>
    </recommendedName>
    <alternativeName>
        <fullName evidence="1">4-HB polyprenyltransferase</fullName>
    </alternativeName>
</protein>
<dbReference type="EC" id="2.5.1.39" evidence="1"/>
<dbReference type="EMBL" id="CP001252">
    <property type="protein sequence ID" value="ACK48294.1"/>
    <property type="molecule type" value="Genomic_DNA"/>
</dbReference>
<dbReference type="RefSeq" id="WP_012197690.1">
    <property type="nucleotide sequence ID" value="NC_011663.1"/>
</dbReference>
<dbReference type="SMR" id="B8E613"/>
<dbReference type="GeneID" id="11774012"/>
<dbReference type="KEGG" id="sbp:Sbal223_3817"/>
<dbReference type="HOGENOM" id="CLU_034879_1_0_6"/>
<dbReference type="UniPathway" id="UPA00232"/>
<dbReference type="Proteomes" id="UP000002507">
    <property type="component" value="Chromosome"/>
</dbReference>
<dbReference type="GO" id="GO:0005886">
    <property type="term" value="C:plasma membrane"/>
    <property type="evidence" value="ECO:0007669"/>
    <property type="project" value="UniProtKB-SubCell"/>
</dbReference>
<dbReference type="GO" id="GO:0008412">
    <property type="term" value="F:4-hydroxybenzoate polyprenyltransferase activity"/>
    <property type="evidence" value="ECO:0007669"/>
    <property type="project" value="UniProtKB-UniRule"/>
</dbReference>
<dbReference type="GO" id="GO:0006744">
    <property type="term" value="P:ubiquinone biosynthetic process"/>
    <property type="evidence" value="ECO:0007669"/>
    <property type="project" value="UniProtKB-UniRule"/>
</dbReference>
<dbReference type="CDD" id="cd13959">
    <property type="entry name" value="PT_UbiA_COQ2"/>
    <property type="match status" value="1"/>
</dbReference>
<dbReference type="FunFam" id="1.10.357.140:FF:000002">
    <property type="entry name" value="4-hydroxybenzoate octaprenyltransferase"/>
    <property type="match status" value="1"/>
</dbReference>
<dbReference type="FunFam" id="1.20.120.1780:FF:000001">
    <property type="entry name" value="4-hydroxybenzoate octaprenyltransferase"/>
    <property type="match status" value="1"/>
</dbReference>
<dbReference type="Gene3D" id="1.10.357.140">
    <property type="entry name" value="UbiA prenyltransferase"/>
    <property type="match status" value="1"/>
</dbReference>
<dbReference type="Gene3D" id="1.20.120.1780">
    <property type="entry name" value="UbiA prenyltransferase"/>
    <property type="match status" value="1"/>
</dbReference>
<dbReference type="HAMAP" id="MF_01635">
    <property type="entry name" value="UbiA"/>
    <property type="match status" value="1"/>
</dbReference>
<dbReference type="InterPro" id="IPR006370">
    <property type="entry name" value="HB_polyprenyltransferase-like"/>
</dbReference>
<dbReference type="InterPro" id="IPR039653">
    <property type="entry name" value="Prenyltransferase"/>
</dbReference>
<dbReference type="InterPro" id="IPR000537">
    <property type="entry name" value="UbiA_prenyltransferase"/>
</dbReference>
<dbReference type="InterPro" id="IPR030470">
    <property type="entry name" value="UbiA_prenylTrfase_CS"/>
</dbReference>
<dbReference type="InterPro" id="IPR044878">
    <property type="entry name" value="UbiA_sf"/>
</dbReference>
<dbReference type="NCBIfam" id="TIGR01474">
    <property type="entry name" value="ubiA_proteo"/>
    <property type="match status" value="1"/>
</dbReference>
<dbReference type="PANTHER" id="PTHR11048:SF28">
    <property type="entry name" value="4-HYDROXYBENZOATE POLYPRENYLTRANSFERASE, MITOCHONDRIAL"/>
    <property type="match status" value="1"/>
</dbReference>
<dbReference type="PANTHER" id="PTHR11048">
    <property type="entry name" value="PRENYLTRANSFERASES"/>
    <property type="match status" value="1"/>
</dbReference>
<dbReference type="Pfam" id="PF01040">
    <property type="entry name" value="UbiA"/>
    <property type="match status" value="1"/>
</dbReference>
<dbReference type="PROSITE" id="PS00943">
    <property type="entry name" value="UBIA"/>
    <property type="match status" value="1"/>
</dbReference>
<proteinExistence type="inferred from homology"/>
<organism>
    <name type="scientific">Shewanella baltica (strain OS223)</name>
    <dbReference type="NCBI Taxonomy" id="407976"/>
    <lineage>
        <taxon>Bacteria</taxon>
        <taxon>Pseudomonadati</taxon>
        <taxon>Pseudomonadota</taxon>
        <taxon>Gammaproteobacteria</taxon>
        <taxon>Alteromonadales</taxon>
        <taxon>Shewanellaceae</taxon>
        <taxon>Shewanella</taxon>
    </lineage>
</organism>
<evidence type="ECO:0000255" key="1">
    <source>
        <dbReference type="HAMAP-Rule" id="MF_01635"/>
    </source>
</evidence>
<comment type="function">
    <text evidence="1">Catalyzes the prenylation of para-hydroxybenzoate (PHB) with an all-trans polyprenyl group. Mediates the second step in the final reaction sequence of ubiquinone-8 (UQ-8) biosynthesis, which is the condensation of the polyisoprenoid side chain with PHB, generating the first membrane-bound Q intermediate 3-octaprenyl-4-hydroxybenzoate.</text>
</comment>
<comment type="catalytic activity">
    <reaction evidence="1">
        <text>all-trans-octaprenyl diphosphate + 4-hydroxybenzoate = 4-hydroxy-3-(all-trans-octaprenyl)benzoate + diphosphate</text>
        <dbReference type="Rhea" id="RHEA:27782"/>
        <dbReference type="ChEBI" id="CHEBI:1617"/>
        <dbReference type="ChEBI" id="CHEBI:17879"/>
        <dbReference type="ChEBI" id="CHEBI:33019"/>
        <dbReference type="ChEBI" id="CHEBI:57711"/>
        <dbReference type="EC" id="2.5.1.39"/>
    </reaction>
</comment>
<comment type="cofactor">
    <cofactor evidence="1">
        <name>Mg(2+)</name>
        <dbReference type="ChEBI" id="CHEBI:18420"/>
    </cofactor>
</comment>
<comment type="pathway">
    <text evidence="1">Cofactor biosynthesis; ubiquinone biosynthesis.</text>
</comment>
<comment type="subcellular location">
    <subcellularLocation>
        <location evidence="1">Cell inner membrane</location>
        <topology evidence="1">Multi-pass membrane protein</topology>
    </subcellularLocation>
</comment>
<comment type="similarity">
    <text evidence="1">Belongs to the UbiA prenyltransferase family.</text>
</comment>
<keyword id="KW-0997">Cell inner membrane</keyword>
<keyword id="KW-1003">Cell membrane</keyword>
<keyword id="KW-0460">Magnesium</keyword>
<keyword id="KW-0472">Membrane</keyword>
<keyword id="KW-0808">Transferase</keyword>
<keyword id="KW-0812">Transmembrane</keyword>
<keyword id="KW-1133">Transmembrane helix</keyword>
<keyword id="KW-0831">Ubiquinone biosynthesis</keyword>
<feature type="chain" id="PRO_1000186690" description="4-hydroxybenzoate octaprenyltransferase">
    <location>
        <begin position="1"/>
        <end position="286"/>
    </location>
</feature>
<feature type="transmembrane region" description="Helical" evidence="1">
    <location>
        <begin position="21"/>
        <end position="40"/>
    </location>
</feature>
<feature type="transmembrane region" description="Helical" evidence="1">
    <location>
        <begin position="95"/>
        <end position="115"/>
    </location>
</feature>
<feature type="transmembrane region" description="Helical" evidence="1">
    <location>
        <begin position="142"/>
        <end position="162"/>
    </location>
</feature>
<feature type="transmembrane region" description="Helical" evidence="1">
    <location>
        <begin position="167"/>
        <end position="187"/>
    </location>
</feature>
<feature type="transmembrane region" description="Helical" evidence="1">
    <location>
        <begin position="210"/>
        <end position="230"/>
    </location>
</feature>
<feature type="transmembrane region" description="Helical" evidence="1">
    <location>
        <begin position="235"/>
        <end position="255"/>
    </location>
</feature>
<feature type="transmembrane region" description="Helical" evidence="1">
    <location>
        <begin position="266"/>
        <end position="286"/>
    </location>
</feature>